<protein>
    <recommendedName>
        <fullName evidence="1">Protein RecA</fullName>
    </recommendedName>
    <alternativeName>
        <fullName evidence="1">Recombinase A</fullName>
    </alternativeName>
</protein>
<evidence type="ECO:0000255" key="1">
    <source>
        <dbReference type="HAMAP-Rule" id="MF_00268"/>
    </source>
</evidence>
<evidence type="ECO:0000305" key="2"/>
<keyword id="KW-0067">ATP-binding</keyword>
<keyword id="KW-0963">Cytoplasm</keyword>
<keyword id="KW-0227">DNA damage</keyword>
<keyword id="KW-0233">DNA recombination</keyword>
<keyword id="KW-0234">DNA repair</keyword>
<keyword id="KW-0238">DNA-binding</keyword>
<keyword id="KW-0547">Nucleotide-binding</keyword>
<keyword id="KW-1185">Reference proteome</keyword>
<keyword id="KW-0742">SOS response</keyword>
<comment type="function">
    <text evidence="1">Can catalyze the hydrolysis of ATP in the presence of single-stranded DNA, the ATP-dependent uptake of single-stranded DNA by duplex DNA, and the ATP-dependent hybridization of homologous single-stranded DNAs. It interacts with LexA causing its activation and leading to its autocatalytic cleavage.</text>
</comment>
<comment type="subcellular location">
    <subcellularLocation>
        <location evidence="1">Cytoplasm</location>
    </subcellularLocation>
</comment>
<comment type="similarity">
    <text evidence="1">Belongs to the RecA family.</text>
</comment>
<dbReference type="EMBL" id="L43967">
    <property type="protein sequence ID" value="AAC71564.1"/>
    <property type="molecule type" value="Genomic_DNA"/>
</dbReference>
<dbReference type="EMBL" id="U01704">
    <property type="protein sequence ID" value="AAB01016.1"/>
    <property type="molecule type" value="Genomic_DNA"/>
</dbReference>
<dbReference type="PIR" id="E64237">
    <property type="entry name" value="E64237"/>
</dbReference>
<dbReference type="RefSeq" id="WP_009885970.1">
    <property type="nucleotide sequence ID" value="NC_000908.2"/>
</dbReference>
<dbReference type="SMR" id="P47581"/>
<dbReference type="FunCoup" id="P47581">
    <property type="interactions" value="186"/>
</dbReference>
<dbReference type="STRING" id="243273.MG_339"/>
<dbReference type="GeneID" id="88282514"/>
<dbReference type="KEGG" id="mge:MG_339"/>
<dbReference type="eggNOG" id="COG0468">
    <property type="taxonomic scope" value="Bacteria"/>
</dbReference>
<dbReference type="HOGENOM" id="CLU_040469_3_2_14"/>
<dbReference type="InParanoid" id="P47581"/>
<dbReference type="OrthoDB" id="9776733at2"/>
<dbReference type="BioCyc" id="MGEN243273:G1GJ2-423-MONOMER"/>
<dbReference type="Proteomes" id="UP000000807">
    <property type="component" value="Chromosome"/>
</dbReference>
<dbReference type="GO" id="GO:0005737">
    <property type="term" value="C:cytoplasm"/>
    <property type="evidence" value="ECO:0007669"/>
    <property type="project" value="UniProtKB-SubCell"/>
</dbReference>
<dbReference type="GO" id="GO:0005524">
    <property type="term" value="F:ATP binding"/>
    <property type="evidence" value="ECO:0007669"/>
    <property type="project" value="UniProtKB-UniRule"/>
</dbReference>
<dbReference type="GO" id="GO:0016887">
    <property type="term" value="F:ATP hydrolysis activity"/>
    <property type="evidence" value="ECO:0007669"/>
    <property type="project" value="InterPro"/>
</dbReference>
<dbReference type="GO" id="GO:0140664">
    <property type="term" value="F:ATP-dependent DNA damage sensor activity"/>
    <property type="evidence" value="ECO:0007669"/>
    <property type="project" value="InterPro"/>
</dbReference>
<dbReference type="GO" id="GO:0003684">
    <property type="term" value="F:damaged DNA binding"/>
    <property type="evidence" value="ECO:0007669"/>
    <property type="project" value="UniProtKB-UniRule"/>
</dbReference>
<dbReference type="GO" id="GO:0003697">
    <property type="term" value="F:single-stranded DNA binding"/>
    <property type="evidence" value="ECO:0007669"/>
    <property type="project" value="UniProtKB-UniRule"/>
</dbReference>
<dbReference type="GO" id="GO:0006310">
    <property type="term" value="P:DNA recombination"/>
    <property type="evidence" value="ECO:0007669"/>
    <property type="project" value="UniProtKB-UniRule"/>
</dbReference>
<dbReference type="GO" id="GO:0006281">
    <property type="term" value="P:DNA repair"/>
    <property type="evidence" value="ECO:0007669"/>
    <property type="project" value="UniProtKB-UniRule"/>
</dbReference>
<dbReference type="GO" id="GO:0009432">
    <property type="term" value="P:SOS response"/>
    <property type="evidence" value="ECO:0007669"/>
    <property type="project" value="UniProtKB-UniRule"/>
</dbReference>
<dbReference type="CDD" id="cd00983">
    <property type="entry name" value="RecA"/>
    <property type="match status" value="1"/>
</dbReference>
<dbReference type="Gene3D" id="3.40.50.300">
    <property type="entry name" value="P-loop containing nucleotide triphosphate hydrolases"/>
    <property type="match status" value="1"/>
</dbReference>
<dbReference type="Gene3D" id="3.30.250.10">
    <property type="entry name" value="RecA protein, C-terminal domain"/>
    <property type="match status" value="1"/>
</dbReference>
<dbReference type="HAMAP" id="MF_00268">
    <property type="entry name" value="RecA"/>
    <property type="match status" value="1"/>
</dbReference>
<dbReference type="InterPro" id="IPR003593">
    <property type="entry name" value="AAA+_ATPase"/>
</dbReference>
<dbReference type="InterPro" id="IPR013765">
    <property type="entry name" value="DNA_recomb/repair_RecA"/>
</dbReference>
<dbReference type="InterPro" id="IPR020584">
    <property type="entry name" value="DNA_recomb/repair_RecA_CS"/>
</dbReference>
<dbReference type="InterPro" id="IPR027417">
    <property type="entry name" value="P-loop_NTPase"/>
</dbReference>
<dbReference type="InterPro" id="IPR049261">
    <property type="entry name" value="RecA-like_C"/>
</dbReference>
<dbReference type="InterPro" id="IPR049428">
    <property type="entry name" value="RecA-like_N"/>
</dbReference>
<dbReference type="InterPro" id="IPR020588">
    <property type="entry name" value="RecA_ATP-bd"/>
</dbReference>
<dbReference type="InterPro" id="IPR023400">
    <property type="entry name" value="RecA_C_sf"/>
</dbReference>
<dbReference type="InterPro" id="IPR020587">
    <property type="entry name" value="RecA_monomer-monomer_interface"/>
</dbReference>
<dbReference type="NCBIfam" id="TIGR02012">
    <property type="entry name" value="tigrfam_recA"/>
    <property type="match status" value="1"/>
</dbReference>
<dbReference type="PANTHER" id="PTHR45900:SF1">
    <property type="entry name" value="MITOCHONDRIAL DNA REPAIR PROTEIN RECA HOMOLOG-RELATED"/>
    <property type="match status" value="1"/>
</dbReference>
<dbReference type="PANTHER" id="PTHR45900">
    <property type="entry name" value="RECA"/>
    <property type="match status" value="1"/>
</dbReference>
<dbReference type="Pfam" id="PF00154">
    <property type="entry name" value="RecA"/>
    <property type="match status" value="1"/>
</dbReference>
<dbReference type="Pfam" id="PF21096">
    <property type="entry name" value="RecA_C"/>
    <property type="match status" value="1"/>
</dbReference>
<dbReference type="PRINTS" id="PR00142">
    <property type="entry name" value="RECA"/>
</dbReference>
<dbReference type="SMART" id="SM00382">
    <property type="entry name" value="AAA"/>
    <property type="match status" value="1"/>
</dbReference>
<dbReference type="SUPFAM" id="SSF52540">
    <property type="entry name" value="P-loop containing nucleoside triphosphate hydrolases"/>
    <property type="match status" value="1"/>
</dbReference>
<dbReference type="SUPFAM" id="SSF54752">
    <property type="entry name" value="RecA protein, C-terminal domain"/>
    <property type="match status" value="1"/>
</dbReference>
<dbReference type="PROSITE" id="PS00321">
    <property type="entry name" value="RECA_1"/>
    <property type="match status" value="1"/>
</dbReference>
<dbReference type="PROSITE" id="PS50162">
    <property type="entry name" value="RECA_2"/>
    <property type="match status" value="1"/>
</dbReference>
<dbReference type="PROSITE" id="PS50163">
    <property type="entry name" value="RECA_3"/>
    <property type="match status" value="1"/>
</dbReference>
<name>RECA_MYCGE</name>
<sequence length="340" mass="37430">MAQKEIINKKNTQKNSSFIESNNLTSFDFFDAKKNSEIETISTGSLNLDEALGSGGLPLGRIVELYGNESSGKTTIALNAVASFQKAGKTACYIDAEGALDLAYAKSIGIDLNKLLIAHPRHGENAFALIESLIKTNKISLIVIDSVAALIPKQELEGTIEEQTIGLHARMMSKGLRRIQSILPDSKTCVLFINQLREKPGVMFGNNEVTTGGKALRFYSSLRMEAKRVELLKDKFNNYVGIKTKVMVSKNKIAKPFGVAILEIMFNRGFVHEHEVIDLALKFNVVVRAGNSYSFNNESIAVGKEKLLNVLSEKPALFEQIKELTVQQLANKNSFQQTAS</sequence>
<feature type="chain" id="PRO_0000122758" description="Protein RecA">
    <location>
        <begin position="1"/>
        <end position="340"/>
    </location>
</feature>
<feature type="binding site" evidence="1">
    <location>
        <begin position="67"/>
        <end position="74"/>
    </location>
    <ligand>
        <name>ATP</name>
        <dbReference type="ChEBI" id="CHEBI:30616"/>
    </ligand>
</feature>
<feature type="sequence conflict" description="In Ref. 2; AAB01016." evidence="2" ref="2">
    <original>AKKNS</original>
    <variation>CKEKH</variation>
    <location>
        <begin position="32"/>
        <end position="36"/>
    </location>
</feature>
<reference key="1">
    <citation type="journal article" date="1995" name="Science">
        <title>The minimal gene complement of Mycoplasma genitalium.</title>
        <authorList>
            <person name="Fraser C.M."/>
            <person name="Gocayne J.D."/>
            <person name="White O."/>
            <person name="Adams M.D."/>
            <person name="Clayton R.A."/>
            <person name="Fleischmann R.D."/>
            <person name="Bult C.J."/>
            <person name="Kerlavage A.R."/>
            <person name="Sutton G.G."/>
            <person name="Kelley J.M."/>
            <person name="Fritchman J.L."/>
            <person name="Weidman J.F."/>
            <person name="Small K.V."/>
            <person name="Sandusky M."/>
            <person name="Fuhrmann J.L."/>
            <person name="Nguyen D.T."/>
            <person name="Utterback T.R."/>
            <person name="Saudek D.M."/>
            <person name="Phillips C.A."/>
            <person name="Merrick J.M."/>
            <person name="Tomb J.-F."/>
            <person name="Dougherty B.A."/>
            <person name="Bott K.F."/>
            <person name="Hu P.-C."/>
            <person name="Lucier T.S."/>
            <person name="Peterson S.N."/>
            <person name="Smith H.O."/>
            <person name="Hutchison C.A. III"/>
            <person name="Venter J.C."/>
        </authorList>
    </citation>
    <scope>NUCLEOTIDE SEQUENCE [LARGE SCALE GENOMIC DNA]</scope>
    <source>
        <strain>ATCC 33530 / DSM 19775 / NCTC 10195 / G37</strain>
    </source>
</reference>
<reference key="2">
    <citation type="journal article" date="1993" name="J. Bacteriol.">
        <title>A survey of the Mycoplasma genitalium genome by using random sequencing.</title>
        <authorList>
            <person name="Peterson S.N."/>
            <person name="Hu P.-C."/>
            <person name="Bott K.F."/>
            <person name="Hutchison C.A. III"/>
        </authorList>
    </citation>
    <scope>NUCLEOTIDE SEQUENCE [GENOMIC DNA] OF 32-124</scope>
    <source>
        <strain>ATCC 33530 / DSM 19775 / NCTC 10195 / G37</strain>
    </source>
</reference>
<organism>
    <name type="scientific">Mycoplasma genitalium (strain ATCC 33530 / DSM 19775 / NCTC 10195 / G37)</name>
    <name type="common">Mycoplasmoides genitalium</name>
    <dbReference type="NCBI Taxonomy" id="243273"/>
    <lineage>
        <taxon>Bacteria</taxon>
        <taxon>Bacillati</taxon>
        <taxon>Mycoplasmatota</taxon>
        <taxon>Mycoplasmoidales</taxon>
        <taxon>Mycoplasmoidaceae</taxon>
        <taxon>Mycoplasmoides</taxon>
    </lineage>
</organism>
<accession>P47581</accession>
<accession>Q49512</accession>
<gene>
    <name evidence="1" type="primary">recA</name>
    <name type="ordered locus">MG339</name>
</gene>
<proteinExistence type="inferred from homology"/>